<gene>
    <name evidence="2" type="primary">psaC</name>
</gene>
<keyword id="KW-0004">4Fe-4S</keyword>
<keyword id="KW-0150">Chloroplast</keyword>
<keyword id="KW-0249">Electron transport</keyword>
<keyword id="KW-0408">Iron</keyword>
<keyword id="KW-0411">Iron-sulfur</keyword>
<keyword id="KW-0472">Membrane</keyword>
<keyword id="KW-0479">Metal-binding</keyword>
<keyword id="KW-0560">Oxidoreductase</keyword>
<keyword id="KW-0602">Photosynthesis</keyword>
<keyword id="KW-0603">Photosystem I</keyword>
<keyword id="KW-0934">Plastid</keyword>
<keyword id="KW-0677">Repeat</keyword>
<keyword id="KW-0793">Thylakoid</keyword>
<keyword id="KW-0813">Transport</keyword>
<dbReference type="EC" id="1.97.1.12" evidence="2"/>
<dbReference type="EMBL" id="AF022186">
    <property type="protein sequence ID" value="AAB82684.1"/>
    <property type="molecule type" value="Genomic_DNA"/>
</dbReference>
<dbReference type="PIR" id="T11973">
    <property type="entry name" value="T11973"/>
</dbReference>
<dbReference type="RefSeq" id="NP_045077.1">
    <property type="nucleotide sequence ID" value="NC_001840.1"/>
</dbReference>
<dbReference type="EMDB" id="EMD-37480"/>
<dbReference type="SMR" id="O19905"/>
<dbReference type="GeneID" id="800166"/>
<dbReference type="GO" id="GO:0009535">
    <property type="term" value="C:chloroplast thylakoid membrane"/>
    <property type="evidence" value="ECO:0007669"/>
    <property type="project" value="UniProtKB-SubCell"/>
</dbReference>
<dbReference type="GO" id="GO:0009522">
    <property type="term" value="C:photosystem I"/>
    <property type="evidence" value="ECO:0007669"/>
    <property type="project" value="UniProtKB-KW"/>
</dbReference>
<dbReference type="GO" id="GO:0051539">
    <property type="term" value="F:4 iron, 4 sulfur cluster binding"/>
    <property type="evidence" value="ECO:0007669"/>
    <property type="project" value="UniProtKB-KW"/>
</dbReference>
<dbReference type="GO" id="GO:0009055">
    <property type="term" value="F:electron transfer activity"/>
    <property type="evidence" value="ECO:0007669"/>
    <property type="project" value="UniProtKB-UniRule"/>
</dbReference>
<dbReference type="GO" id="GO:0046872">
    <property type="term" value="F:metal ion binding"/>
    <property type="evidence" value="ECO:0007669"/>
    <property type="project" value="UniProtKB-KW"/>
</dbReference>
<dbReference type="GO" id="GO:0016491">
    <property type="term" value="F:oxidoreductase activity"/>
    <property type="evidence" value="ECO:0007669"/>
    <property type="project" value="UniProtKB-KW"/>
</dbReference>
<dbReference type="GO" id="GO:0009773">
    <property type="term" value="P:photosynthetic electron transport in photosystem I"/>
    <property type="evidence" value="ECO:0007669"/>
    <property type="project" value="InterPro"/>
</dbReference>
<dbReference type="FunFam" id="3.30.70.20:FF:000001">
    <property type="entry name" value="Photosystem I iron-sulfur center"/>
    <property type="match status" value="1"/>
</dbReference>
<dbReference type="Gene3D" id="3.30.70.20">
    <property type="match status" value="1"/>
</dbReference>
<dbReference type="HAMAP" id="MF_01303">
    <property type="entry name" value="PSI_PsaC"/>
    <property type="match status" value="1"/>
</dbReference>
<dbReference type="InterPro" id="IPR017896">
    <property type="entry name" value="4Fe4S_Fe-S-bd"/>
</dbReference>
<dbReference type="InterPro" id="IPR017900">
    <property type="entry name" value="4Fe4S_Fe_S_CS"/>
</dbReference>
<dbReference type="InterPro" id="IPR050157">
    <property type="entry name" value="PSI_iron-sulfur_center"/>
</dbReference>
<dbReference type="InterPro" id="IPR017491">
    <property type="entry name" value="PSI_PsaC"/>
</dbReference>
<dbReference type="NCBIfam" id="TIGR03048">
    <property type="entry name" value="PS_I_psaC"/>
    <property type="match status" value="1"/>
</dbReference>
<dbReference type="PANTHER" id="PTHR24960:SF79">
    <property type="entry name" value="PHOTOSYSTEM I IRON-SULFUR CENTER"/>
    <property type="match status" value="1"/>
</dbReference>
<dbReference type="PANTHER" id="PTHR24960">
    <property type="entry name" value="PHOTOSYSTEM I IRON-SULFUR CENTER-RELATED"/>
    <property type="match status" value="1"/>
</dbReference>
<dbReference type="Pfam" id="PF12838">
    <property type="entry name" value="Fer4_7"/>
    <property type="match status" value="1"/>
</dbReference>
<dbReference type="SUPFAM" id="SSF54862">
    <property type="entry name" value="4Fe-4S ferredoxins"/>
    <property type="match status" value="1"/>
</dbReference>
<dbReference type="PROSITE" id="PS00198">
    <property type="entry name" value="4FE4S_FER_1"/>
    <property type="match status" value="2"/>
</dbReference>
<dbReference type="PROSITE" id="PS51379">
    <property type="entry name" value="4FE4S_FER_2"/>
    <property type="match status" value="2"/>
</dbReference>
<protein>
    <recommendedName>
        <fullName evidence="2">Photosystem I iron-sulfur center</fullName>
        <ecNumber evidence="2">1.97.1.12</ecNumber>
    </recommendedName>
    <alternativeName>
        <fullName evidence="2">9 kDa polypeptide</fullName>
    </alternativeName>
    <alternativeName>
        <fullName evidence="2">PSI-C</fullName>
    </alternativeName>
    <alternativeName>
        <fullName evidence="2">Photosystem I subunit VII</fullName>
    </alternativeName>
    <alternativeName>
        <fullName evidence="2">PsaC</fullName>
    </alternativeName>
</protein>
<sequence length="81" mass="8888">MVHVVKIYDTCIGCTQCVRACPCDVLEMVPWDGCKASQIASSPRTEDCIGCKRCETACPTDFLSIRVYLGAETSRSMGLTY</sequence>
<geneLocation type="chloroplast"/>
<evidence type="ECO:0000250" key="1"/>
<evidence type="ECO:0000255" key="2">
    <source>
        <dbReference type="HAMAP-Rule" id="MF_01303"/>
    </source>
</evidence>
<comment type="function">
    <text>Apoprotein for the two 4Fe-4S centers FA and FB of photosystem I (PSI); essential for photochemical activity. FB is the terminal electron acceptor of PSI, donating electrons to ferredoxin. The C-terminus interacts with PsaA/B/D and helps assemble the protein into the PSI complex. Required for binding of PsaD and PsaE to PSI. PSI is a plastocyanin/cytochrome c6-ferredoxin oxidoreductase, converting photonic excitation into a charge separation, which transfers an electron from the donor P700 chlorophyll pair to the spectroscopically characterized acceptors A0, A1, FX, FA and FB in turn.</text>
</comment>
<comment type="catalytic activity">
    <reaction evidence="2">
        <text>reduced [plastocyanin] + hnu + oxidized [2Fe-2S]-[ferredoxin] = oxidized [plastocyanin] + reduced [2Fe-2S]-[ferredoxin]</text>
        <dbReference type="Rhea" id="RHEA:30407"/>
        <dbReference type="Rhea" id="RHEA-COMP:10000"/>
        <dbReference type="Rhea" id="RHEA-COMP:10001"/>
        <dbReference type="Rhea" id="RHEA-COMP:10039"/>
        <dbReference type="Rhea" id="RHEA-COMP:10040"/>
        <dbReference type="ChEBI" id="CHEBI:29036"/>
        <dbReference type="ChEBI" id="CHEBI:30212"/>
        <dbReference type="ChEBI" id="CHEBI:33737"/>
        <dbReference type="ChEBI" id="CHEBI:33738"/>
        <dbReference type="ChEBI" id="CHEBI:49552"/>
        <dbReference type="EC" id="1.97.1.12"/>
    </reaction>
</comment>
<comment type="cofactor">
    <cofactor evidence="2">
        <name>[4Fe-4S] cluster</name>
        <dbReference type="ChEBI" id="CHEBI:49883"/>
    </cofactor>
    <text evidence="2">Binds 2 [4Fe-4S] clusters. Cluster 2 is most probably the spectroscopically characterized electron acceptor FA and cluster 1 is most probably FB.</text>
</comment>
<comment type="subunit">
    <text evidence="2">The eukaryotic PSI reaction center is composed of at least 11 subunits.</text>
</comment>
<comment type="subcellular location">
    <subcellularLocation>
        <location evidence="2">Plastid</location>
        <location evidence="2">Chloroplast thylakoid membrane</location>
        <topology evidence="2">Peripheral membrane protein</topology>
        <orientation evidence="2">Stromal side</orientation>
    </subcellularLocation>
</comment>
<proteinExistence type="inferred from homology"/>
<name>PSAC_CYACA</name>
<feature type="initiator methionine" description="Removed" evidence="1">
    <location>
        <position position="1"/>
    </location>
</feature>
<feature type="chain" id="PRO_0000061977" description="Photosystem I iron-sulfur center">
    <location>
        <begin position="2"/>
        <end position="81"/>
    </location>
</feature>
<feature type="domain" description="4Fe-4S ferredoxin-type 1" evidence="2">
    <location>
        <begin position="2"/>
        <end position="31"/>
    </location>
</feature>
<feature type="domain" description="4Fe-4S ferredoxin-type 2" evidence="2">
    <location>
        <begin position="39"/>
        <end position="68"/>
    </location>
</feature>
<feature type="binding site" evidence="2">
    <location>
        <position position="11"/>
    </location>
    <ligand>
        <name>[4Fe-4S] cluster</name>
        <dbReference type="ChEBI" id="CHEBI:49883"/>
        <label>1</label>
    </ligand>
</feature>
<feature type="binding site" evidence="2">
    <location>
        <position position="14"/>
    </location>
    <ligand>
        <name>[4Fe-4S] cluster</name>
        <dbReference type="ChEBI" id="CHEBI:49883"/>
        <label>1</label>
    </ligand>
</feature>
<feature type="binding site" evidence="2">
    <location>
        <position position="17"/>
    </location>
    <ligand>
        <name>[4Fe-4S] cluster</name>
        <dbReference type="ChEBI" id="CHEBI:49883"/>
        <label>1</label>
    </ligand>
</feature>
<feature type="binding site" evidence="2">
    <location>
        <position position="21"/>
    </location>
    <ligand>
        <name>[4Fe-4S] cluster</name>
        <dbReference type="ChEBI" id="CHEBI:49883"/>
        <label>2</label>
    </ligand>
</feature>
<feature type="binding site" evidence="2">
    <location>
        <position position="48"/>
    </location>
    <ligand>
        <name>[4Fe-4S] cluster</name>
        <dbReference type="ChEBI" id="CHEBI:49883"/>
        <label>2</label>
    </ligand>
</feature>
<feature type="binding site" evidence="2">
    <location>
        <position position="51"/>
    </location>
    <ligand>
        <name>[4Fe-4S] cluster</name>
        <dbReference type="ChEBI" id="CHEBI:49883"/>
        <label>2</label>
    </ligand>
</feature>
<feature type="binding site" evidence="2">
    <location>
        <position position="54"/>
    </location>
    <ligand>
        <name>[4Fe-4S] cluster</name>
        <dbReference type="ChEBI" id="CHEBI:49883"/>
        <label>2</label>
    </ligand>
</feature>
<feature type="binding site" evidence="2">
    <location>
        <position position="58"/>
    </location>
    <ligand>
        <name>[4Fe-4S] cluster</name>
        <dbReference type="ChEBI" id="CHEBI:49883"/>
        <label>1</label>
    </ligand>
</feature>
<accession>O19905</accession>
<reference key="1">
    <citation type="journal article" date="2000" name="J. Mol. Evol.">
        <title>The structure and gene repertoire of an ancient red algal plastid genome.</title>
        <authorList>
            <person name="Gloeckner G."/>
            <person name="Rosenthal A."/>
            <person name="Valentin K.-U."/>
        </authorList>
    </citation>
    <scope>NUCLEOTIDE SEQUENCE [LARGE SCALE GENOMIC DNA]</scope>
    <source>
        <strain>RK-1</strain>
    </source>
</reference>
<organism>
    <name type="scientific">Cyanidium caldarium</name>
    <name type="common">Red alga</name>
    <dbReference type="NCBI Taxonomy" id="2771"/>
    <lineage>
        <taxon>Eukaryota</taxon>
        <taxon>Rhodophyta</taxon>
        <taxon>Bangiophyceae</taxon>
        <taxon>Cyanidiales</taxon>
        <taxon>Cyanidiaceae</taxon>
        <taxon>Cyanidium</taxon>
    </lineage>
</organism>